<gene>
    <name evidence="1" type="primary">aroC</name>
    <name type="ordered locus">P9215_02461</name>
</gene>
<proteinExistence type="inferred from homology"/>
<organism>
    <name type="scientific">Prochlorococcus marinus (strain MIT 9215)</name>
    <dbReference type="NCBI Taxonomy" id="93060"/>
    <lineage>
        <taxon>Bacteria</taxon>
        <taxon>Bacillati</taxon>
        <taxon>Cyanobacteriota</taxon>
        <taxon>Cyanophyceae</taxon>
        <taxon>Synechococcales</taxon>
        <taxon>Prochlorococcaceae</taxon>
        <taxon>Prochlorococcus</taxon>
    </lineage>
</organism>
<reference key="1">
    <citation type="journal article" date="2007" name="PLoS Genet.">
        <title>Patterns and implications of gene gain and loss in the evolution of Prochlorococcus.</title>
        <authorList>
            <person name="Kettler G.C."/>
            <person name="Martiny A.C."/>
            <person name="Huang K."/>
            <person name="Zucker J."/>
            <person name="Coleman M.L."/>
            <person name="Rodrigue S."/>
            <person name="Chen F."/>
            <person name="Lapidus A."/>
            <person name="Ferriera S."/>
            <person name="Johnson J."/>
            <person name="Steglich C."/>
            <person name="Church G.M."/>
            <person name="Richardson P."/>
            <person name="Chisholm S.W."/>
        </authorList>
    </citation>
    <scope>NUCLEOTIDE SEQUENCE [LARGE SCALE GENOMIC DNA]</scope>
    <source>
        <strain>MIT 9215</strain>
    </source>
</reference>
<sequence length="365" mass="39707">MSSSFGKIFRVSTFGESHGGAVGVILDGCPPKLKVDINMIQNELDRRRPGQSDITTPRNEEDKIEILSGIKEGLTLGTPIAMLVRNKDQRPRDYDNLDQVFRPSHADGTYHLKYGIQASSGGGRASARETIGRVAAGAVAKQLLKNFCNTEILSWVKRIHDIDSDINKEKISLNKIDSNIVRCPDEKISAEMIERIKQLKRQGDSCGGVIECLVKNVPSGLGMPVFDKLEADLAKALMSLPATKGFEIGSGFSGTYLKGSEHNDAFIKSDDIRKLRTISNNSGGIQGGISNGENIEMKIAFKPTATIGKEQKTVNAEGKEVLMRAKGRHDPCVLPRAVPMVDAMVALVLVDHLLLNQAQCGLIDN</sequence>
<dbReference type="EC" id="4.2.3.5" evidence="1"/>
<dbReference type="EMBL" id="CP000825">
    <property type="protein sequence ID" value="ABV49863.1"/>
    <property type="molecule type" value="Genomic_DNA"/>
</dbReference>
<dbReference type="RefSeq" id="WP_012007027.1">
    <property type="nucleotide sequence ID" value="NC_009840.1"/>
</dbReference>
<dbReference type="SMR" id="A8G2N2"/>
<dbReference type="STRING" id="93060.P9215_02461"/>
<dbReference type="KEGG" id="pmh:P9215_02461"/>
<dbReference type="eggNOG" id="COG0082">
    <property type="taxonomic scope" value="Bacteria"/>
</dbReference>
<dbReference type="HOGENOM" id="CLU_034547_0_1_3"/>
<dbReference type="OrthoDB" id="9771806at2"/>
<dbReference type="UniPathway" id="UPA00053">
    <property type="reaction ID" value="UER00090"/>
</dbReference>
<dbReference type="Proteomes" id="UP000002014">
    <property type="component" value="Chromosome"/>
</dbReference>
<dbReference type="GO" id="GO:0005829">
    <property type="term" value="C:cytosol"/>
    <property type="evidence" value="ECO:0007669"/>
    <property type="project" value="TreeGrafter"/>
</dbReference>
<dbReference type="GO" id="GO:0004107">
    <property type="term" value="F:chorismate synthase activity"/>
    <property type="evidence" value="ECO:0007669"/>
    <property type="project" value="UniProtKB-UniRule"/>
</dbReference>
<dbReference type="GO" id="GO:0010181">
    <property type="term" value="F:FMN binding"/>
    <property type="evidence" value="ECO:0007669"/>
    <property type="project" value="TreeGrafter"/>
</dbReference>
<dbReference type="GO" id="GO:0008652">
    <property type="term" value="P:amino acid biosynthetic process"/>
    <property type="evidence" value="ECO:0007669"/>
    <property type="project" value="UniProtKB-KW"/>
</dbReference>
<dbReference type="GO" id="GO:0009073">
    <property type="term" value="P:aromatic amino acid family biosynthetic process"/>
    <property type="evidence" value="ECO:0007669"/>
    <property type="project" value="UniProtKB-KW"/>
</dbReference>
<dbReference type="GO" id="GO:0009423">
    <property type="term" value="P:chorismate biosynthetic process"/>
    <property type="evidence" value="ECO:0007669"/>
    <property type="project" value="UniProtKB-UniRule"/>
</dbReference>
<dbReference type="CDD" id="cd07304">
    <property type="entry name" value="Chorismate_synthase"/>
    <property type="match status" value="1"/>
</dbReference>
<dbReference type="FunFam" id="3.60.150.10:FF:000003">
    <property type="entry name" value="Chorismate synthase"/>
    <property type="match status" value="1"/>
</dbReference>
<dbReference type="Gene3D" id="3.60.150.10">
    <property type="entry name" value="Chorismate synthase AroC"/>
    <property type="match status" value="1"/>
</dbReference>
<dbReference type="HAMAP" id="MF_00300">
    <property type="entry name" value="Chorismate_synth"/>
    <property type="match status" value="1"/>
</dbReference>
<dbReference type="InterPro" id="IPR000453">
    <property type="entry name" value="Chorismate_synth"/>
</dbReference>
<dbReference type="InterPro" id="IPR035904">
    <property type="entry name" value="Chorismate_synth_AroC_sf"/>
</dbReference>
<dbReference type="InterPro" id="IPR020541">
    <property type="entry name" value="Chorismate_synthase_CS"/>
</dbReference>
<dbReference type="NCBIfam" id="TIGR00033">
    <property type="entry name" value="aroC"/>
    <property type="match status" value="1"/>
</dbReference>
<dbReference type="NCBIfam" id="NF003793">
    <property type="entry name" value="PRK05382.1"/>
    <property type="match status" value="1"/>
</dbReference>
<dbReference type="PANTHER" id="PTHR21085">
    <property type="entry name" value="CHORISMATE SYNTHASE"/>
    <property type="match status" value="1"/>
</dbReference>
<dbReference type="PANTHER" id="PTHR21085:SF0">
    <property type="entry name" value="CHORISMATE SYNTHASE"/>
    <property type="match status" value="1"/>
</dbReference>
<dbReference type="Pfam" id="PF01264">
    <property type="entry name" value="Chorismate_synt"/>
    <property type="match status" value="1"/>
</dbReference>
<dbReference type="PIRSF" id="PIRSF001456">
    <property type="entry name" value="Chorismate_synth"/>
    <property type="match status" value="1"/>
</dbReference>
<dbReference type="SUPFAM" id="SSF103263">
    <property type="entry name" value="Chorismate synthase, AroC"/>
    <property type="match status" value="1"/>
</dbReference>
<dbReference type="PROSITE" id="PS00787">
    <property type="entry name" value="CHORISMATE_SYNTHASE_1"/>
    <property type="match status" value="1"/>
</dbReference>
<dbReference type="PROSITE" id="PS00788">
    <property type="entry name" value="CHORISMATE_SYNTHASE_2"/>
    <property type="match status" value="1"/>
</dbReference>
<protein>
    <recommendedName>
        <fullName evidence="1">Chorismate synthase</fullName>
        <shortName evidence="1">CS</shortName>
        <ecNumber evidence="1">4.2.3.5</ecNumber>
    </recommendedName>
    <alternativeName>
        <fullName evidence="1">5-enolpyruvylshikimate-3-phosphate phospholyase</fullName>
    </alternativeName>
</protein>
<feature type="chain" id="PRO_1000059313" description="Chorismate synthase">
    <location>
        <begin position="1"/>
        <end position="365"/>
    </location>
</feature>
<feature type="binding site" evidence="1">
    <location>
        <position position="47"/>
    </location>
    <ligand>
        <name>NADP(+)</name>
        <dbReference type="ChEBI" id="CHEBI:58349"/>
    </ligand>
</feature>
<feature type="binding site" evidence="1">
    <location>
        <begin position="124"/>
        <end position="126"/>
    </location>
    <ligand>
        <name>FMN</name>
        <dbReference type="ChEBI" id="CHEBI:58210"/>
    </ligand>
</feature>
<feature type="binding site" evidence="1">
    <location>
        <position position="287"/>
    </location>
    <ligand>
        <name>FMN</name>
        <dbReference type="ChEBI" id="CHEBI:58210"/>
    </ligand>
</feature>
<feature type="binding site" evidence="1">
    <location>
        <begin position="302"/>
        <end position="306"/>
    </location>
    <ligand>
        <name>FMN</name>
        <dbReference type="ChEBI" id="CHEBI:58210"/>
    </ligand>
</feature>
<feature type="binding site" evidence="1">
    <location>
        <position position="328"/>
    </location>
    <ligand>
        <name>FMN</name>
        <dbReference type="ChEBI" id="CHEBI:58210"/>
    </ligand>
</feature>
<comment type="function">
    <text evidence="1">Catalyzes the anti-1,4-elimination of the C-3 phosphate and the C-6 proR hydrogen from 5-enolpyruvylshikimate-3-phosphate (EPSP) to yield chorismate, which is the branch point compound that serves as the starting substrate for the three terminal pathways of aromatic amino acid biosynthesis. This reaction introduces a second double bond into the aromatic ring system.</text>
</comment>
<comment type="catalytic activity">
    <reaction evidence="1">
        <text>5-O-(1-carboxyvinyl)-3-phosphoshikimate = chorismate + phosphate</text>
        <dbReference type="Rhea" id="RHEA:21020"/>
        <dbReference type="ChEBI" id="CHEBI:29748"/>
        <dbReference type="ChEBI" id="CHEBI:43474"/>
        <dbReference type="ChEBI" id="CHEBI:57701"/>
        <dbReference type="EC" id="4.2.3.5"/>
    </reaction>
</comment>
<comment type="cofactor">
    <cofactor evidence="1">
        <name>FMNH2</name>
        <dbReference type="ChEBI" id="CHEBI:57618"/>
    </cofactor>
    <text evidence="1">Reduced FMN (FMNH(2)).</text>
</comment>
<comment type="pathway">
    <text evidence="1">Metabolic intermediate biosynthesis; chorismate biosynthesis; chorismate from D-erythrose 4-phosphate and phosphoenolpyruvate: step 7/7.</text>
</comment>
<comment type="subunit">
    <text evidence="1">Homotetramer.</text>
</comment>
<comment type="similarity">
    <text evidence="1">Belongs to the chorismate synthase family.</text>
</comment>
<keyword id="KW-0028">Amino-acid biosynthesis</keyword>
<keyword id="KW-0057">Aromatic amino acid biosynthesis</keyword>
<keyword id="KW-0274">FAD</keyword>
<keyword id="KW-0285">Flavoprotein</keyword>
<keyword id="KW-0288">FMN</keyword>
<keyword id="KW-0456">Lyase</keyword>
<keyword id="KW-0521">NADP</keyword>
<evidence type="ECO:0000255" key="1">
    <source>
        <dbReference type="HAMAP-Rule" id="MF_00300"/>
    </source>
</evidence>
<name>AROC_PROM2</name>
<accession>A8G2N2</accession>